<accession>B4UDQ9</accession>
<dbReference type="EC" id="2.7.7.7" evidence="1"/>
<dbReference type="EMBL" id="CP001131">
    <property type="protein sequence ID" value="ACG73475.1"/>
    <property type="molecule type" value="Genomic_DNA"/>
</dbReference>
<dbReference type="RefSeq" id="WP_012526274.1">
    <property type="nucleotide sequence ID" value="NC_011145.1"/>
</dbReference>
<dbReference type="SMR" id="B4UDQ9"/>
<dbReference type="KEGG" id="ank:AnaeK_2248"/>
<dbReference type="HOGENOM" id="CLU_001600_4_0_7"/>
<dbReference type="OrthoDB" id="9803237at2"/>
<dbReference type="Proteomes" id="UP000001871">
    <property type="component" value="Chromosome"/>
</dbReference>
<dbReference type="GO" id="GO:0005737">
    <property type="term" value="C:cytoplasm"/>
    <property type="evidence" value="ECO:0007669"/>
    <property type="project" value="UniProtKB-SubCell"/>
</dbReference>
<dbReference type="GO" id="GO:0008408">
    <property type="term" value="F:3'-5' exonuclease activity"/>
    <property type="evidence" value="ECO:0007669"/>
    <property type="project" value="InterPro"/>
</dbReference>
<dbReference type="GO" id="GO:0003887">
    <property type="term" value="F:DNA-directed DNA polymerase activity"/>
    <property type="evidence" value="ECO:0007669"/>
    <property type="project" value="UniProtKB-KW"/>
</dbReference>
<dbReference type="GO" id="GO:0003676">
    <property type="term" value="F:nucleic acid binding"/>
    <property type="evidence" value="ECO:0007669"/>
    <property type="project" value="InterPro"/>
</dbReference>
<dbReference type="GO" id="GO:0006281">
    <property type="term" value="P:DNA repair"/>
    <property type="evidence" value="ECO:0007669"/>
    <property type="project" value="UniProtKB-KW"/>
</dbReference>
<dbReference type="GO" id="GO:0006260">
    <property type="term" value="P:DNA replication"/>
    <property type="evidence" value="ECO:0007669"/>
    <property type="project" value="UniProtKB-KW"/>
</dbReference>
<dbReference type="CDD" id="cd04485">
    <property type="entry name" value="DnaE_OBF"/>
    <property type="match status" value="1"/>
</dbReference>
<dbReference type="CDD" id="cd07434">
    <property type="entry name" value="PHP_PolIIIA_DnaE2"/>
    <property type="match status" value="1"/>
</dbReference>
<dbReference type="Gene3D" id="1.10.150.870">
    <property type="match status" value="1"/>
</dbReference>
<dbReference type="Gene3D" id="1.10.10.1600">
    <property type="entry name" value="Bacterial DNA polymerase III alpha subunit, thumb domain"/>
    <property type="match status" value="1"/>
</dbReference>
<dbReference type="Gene3D" id="3.20.20.140">
    <property type="entry name" value="Metal-dependent hydrolases"/>
    <property type="match status" value="1"/>
</dbReference>
<dbReference type="HAMAP" id="MF_01902">
    <property type="entry name" value="DNApol_error_prone"/>
    <property type="match status" value="1"/>
</dbReference>
<dbReference type="InterPro" id="IPR011708">
    <property type="entry name" value="DNA_pol3_alpha_NTPase_dom"/>
</dbReference>
<dbReference type="InterPro" id="IPR041931">
    <property type="entry name" value="DNA_pol3_alpha_thumb_dom"/>
</dbReference>
<dbReference type="InterPro" id="IPR040982">
    <property type="entry name" value="DNA_pol3_finger"/>
</dbReference>
<dbReference type="InterPro" id="IPR023073">
    <property type="entry name" value="DnaE2"/>
</dbReference>
<dbReference type="InterPro" id="IPR004805">
    <property type="entry name" value="DnaE2/DnaE/PolC"/>
</dbReference>
<dbReference type="InterPro" id="IPR029460">
    <property type="entry name" value="DNAPol_HHH"/>
</dbReference>
<dbReference type="InterPro" id="IPR004365">
    <property type="entry name" value="NA-bd_OB_tRNA"/>
</dbReference>
<dbReference type="InterPro" id="IPR004013">
    <property type="entry name" value="PHP_dom"/>
</dbReference>
<dbReference type="InterPro" id="IPR003141">
    <property type="entry name" value="Pol/His_phosphatase_N"/>
</dbReference>
<dbReference type="InterPro" id="IPR016195">
    <property type="entry name" value="Pol/histidinol_Pase-like"/>
</dbReference>
<dbReference type="NCBIfam" id="TIGR00594">
    <property type="entry name" value="polc"/>
    <property type="match status" value="1"/>
</dbReference>
<dbReference type="NCBIfam" id="NF004225">
    <property type="entry name" value="PRK05672.1"/>
    <property type="match status" value="1"/>
</dbReference>
<dbReference type="PANTHER" id="PTHR32294">
    <property type="entry name" value="DNA POLYMERASE III SUBUNIT ALPHA"/>
    <property type="match status" value="1"/>
</dbReference>
<dbReference type="PANTHER" id="PTHR32294:SF4">
    <property type="entry name" value="ERROR-PRONE DNA POLYMERASE"/>
    <property type="match status" value="1"/>
</dbReference>
<dbReference type="Pfam" id="PF07733">
    <property type="entry name" value="DNA_pol3_alpha"/>
    <property type="match status" value="1"/>
</dbReference>
<dbReference type="Pfam" id="PF17657">
    <property type="entry name" value="DNA_pol3_finger"/>
    <property type="match status" value="1"/>
</dbReference>
<dbReference type="Pfam" id="PF14579">
    <property type="entry name" value="HHH_6"/>
    <property type="match status" value="1"/>
</dbReference>
<dbReference type="Pfam" id="PF02811">
    <property type="entry name" value="PHP"/>
    <property type="match status" value="1"/>
</dbReference>
<dbReference type="Pfam" id="PF01336">
    <property type="entry name" value="tRNA_anti-codon"/>
    <property type="match status" value="1"/>
</dbReference>
<dbReference type="SMART" id="SM00481">
    <property type="entry name" value="POLIIIAc"/>
    <property type="match status" value="1"/>
</dbReference>
<dbReference type="SUPFAM" id="SSF89550">
    <property type="entry name" value="PHP domain-like"/>
    <property type="match status" value="1"/>
</dbReference>
<name>DNAE2_ANASK</name>
<evidence type="ECO:0000255" key="1">
    <source>
        <dbReference type="HAMAP-Rule" id="MF_01902"/>
    </source>
</evidence>
<proteinExistence type="inferred from homology"/>
<gene>
    <name evidence="1" type="primary">dnaE2</name>
    <name type="ordered locus">AnaeK_2248</name>
</gene>
<organism>
    <name type="scientific">Anaeromyxobacter sp. (strain K)</name>
    <dbReference type="NCBI Taxonomy" id="447217"/>
    <lineage>
        <taxon>Bacteria</taxon>
        <taxon>Pseudomonadati</taxon>
        <taxon>Myxococcota</taxon>
        <taxon>Myxococcia</taxon>
        <taxon>Myxococcales</taxon>
        <taxon>Cystobacterineae</taxon>
        <taxon>Anaeromyxobacteraceae</taxon>
        <taxon>Anaeromyxobacter</taxon>
    </lineage>
</organism>
<feature type="chain" id="PRO_1000188731" description="Error-prone DNA polymerase">
    <location>
        <begin position="1"/>
        <end position="1133"/>
    </location>
</feature>
<protein>
    <recommendedName>
        <fullName evidence="1">Error-prone DNA polymerase</fullName>
        <ecNumber evidence="1">2.7.7.7</ecNumber>
    </recommendedName>
</protein>
<sequence>MSHAPRYAELRCKSCFSFLEGASHPEELVGRAAELGLSALALADVNGLYGIVRAHAEAKRQGLPLIVGAELVVAGLAPGRPARLVLLAQDREGYAGLCRLVTRAHCGEGWTGAPERRERDAVAVPFEAVAAGARGLFALYPGADGDAVARLKDAFGRRAALAVARHRVAGEEARVLAARSAGRRLGVPVAVTNDVHTHARARQVLQDVLTCVRHGTTVDRAGRRLFPNAERTLKGPEELARLWSDFPEGLAAAADIADQCRFRMEAIRGEHPLPPVVVERGALAGGVEVATSSPAQAAREGARTATPSLSLRASLPAERPAAPAIEGCAASGPGLPAAGAGGGAAAAAATDRDGALAGMSLLRELVREGARWRYGGEPPEDVARQLARELELVESLGYASYFLTVWDVVRFARSRGILCQGRGSAANSAVCYVLGITSIDPVRMGLLFERFISAERGEPPDIDVDFEHERREEVLQYVYQRYGRDRAGMVCEVITYRGKSALRDVGKALGLSLGQVDRLAKLIGTYEDLGQVGPELLAQAGLDAADSERVRMTLALARELQGFPRHLSIHVGGFVITRRPLCETVPIEPAAMPGRTIVQWDKDDLAELDLLKVDLLGLGMLTALSRALALLARHRPAPASPTAVPHPDALATIPAEDPEVYEMLGRADSIGVFQVESRAQMSLAPRLRPRNFYDLVISVAIIRPGPIQGGMIHPYLRRRDGKEQVRYPYAPLEPVLARTLGVPLFQEQAMRLAVIAAGFTPGEADELRRVMTHRRSHEKLAAMKARLVAGMAERGISGADAEEIFKQLLGFAGYGFPESHAASFALLVYASAWLKRYHPAAFACALLNSQPMGFYAPHTLVEDAKRHGVEVRGVDVGCSGWESSLEGAAPGRPAAPGETAVLRVGLHAVRGLPRAVGEAILEARAAGPFGSVAELVRRARLSRAWLVRLAEAGALGALAPDRRDAVWRSLAVEADGGDLFAGLAPPEPEVALPAASAADEVSADFATTGLSVRGHPMALVRPGLGGDRIRTARELGRLPDRAPVEVAGLVIVRQRPETARGIVFVSLEDETGIANLVVMPDVYERFRPVVRGAPFLLARGRVERSGKVVNVRVDSVAPLALAPATGARARDFH</sequence>
<reference key="1">
    <citation type="submission" date="2008-08" db="EMBL/GenBank/DDBJ databases">
        <title>Complete sequence of Anaeromyxobacter sp. K.</title>
        <authorList>
            <consortium name="US DOE Joint Genome Institute"/>
            <person name="Lucas S."/>
            <person name="Copeland A."/>
            <person name="Lapidus A."/>
            <person name="Glavina del Rio T."/>
            <person name="Dalin E."/>
            <person name="Tice H."/>
            <person name="Bruce D."/>
            <person name="Goodwin L."/>
            <person name="Pitluck S."/>
            <person name="Saunders E."/>
            <person name="Brettin T."/>
            <person name="Detter J.C."/>
            <person name="Han C."/>
            <person name="Larimer F."/>
            <person name="Land M."/>
            <person name="Hauser L."/>
            <person name="Kyrpides N."/>
            <person name="Ovchinnikiva G."/>
            <person name="Beliaev A."/>
        </authorList>
    </citation>
    <scope>NUCLEOTIDE SEQUENCE [LARGE SCALE GENOMIC DNA]</scope>
    <source>
        <strain>K</strain>
    </source>
</reference>
<keyword id="KW-0963">Cytoplasm</keyword>
<keyword id="KW-0227">DNA damage</keyword>
<keyword id="KW-0234">DNA repair</keyword>
<keyword id="KW-0235">DNA replication</keyword>
<keyword id="KW-0239">DNA-directed DNA polymerase</keyword>
<keyword id="KW-0548">Nucleotidyltransferase</keyword>
<keyword id="KW-0808">Transferase</keyword>
<comment type="function">
    <text evidence="1">DNA polymerase involved in damage-induced mutagenesis and translesion synthesis (TLS). It is not the major replicative DNA polymerase.</text>
</comment>
<comment type="catalytic activity">
    <reaction evidence="1">
        <text>DNA(n) + a 2'-deoxyribonucleoside 5'-triphosphate = DNA(n+1) + diphosphate</text>
        <dbReference type="Rhea" id="RHEA:22508"/>
        <dbReference type="Rhea" id="RHEA-COMP:17339"/>
        <dbReference type="Rhea" id="RHEA-COMP:17340"/>
        <dbReference type="ChEBI" id="CHEBI:33019"/>
        <dbReference type="ChEBI" id="CHEBI:61560"/>
        <dbReference type="ChEBI" id="CHEBI:173112"/>
        <dbReference type="EC" id="2.7.7.7"/>
    </reaction>
</comment>
<comment type="subcellular location">
    <subcellularLocation>
        <location evidence="1">Cytoplasm</location>
    </subcellularLocation>
</comment>
<comment type="similarity">
    <text evidence="1">Belongs to the DNA polymerase type-C family. DnaE2 subfamily.</text>
</comment>